<dbReference type="EMBL" id="AE000516">
    <property type="protein sequence ID" value="AAK46369.1"/>
    <property type="molecule type" value="Genomic_DNA"/>
</dbReference>
<dbReference type="PIR" id="F70942">
    <property type="entry name" value="F70942"/>
</dbReference>
<dbReference type="RefSeq" id="WP_003410189.1">
    <property type="nucleotide sequence ID" value="NZ_KK341227.1"/>
</dbReference>
<dbReference type="SMR" id="P9WMK0"/>
<dbReference type="KEGG" id="mtc:MT2090"/>
<dbReference type="PATRIC" id="fig|83331.31.peg.2254"/>
<dbReference type="HOGENOM" id="CLU_046737_8_2_11"/>
<dbReference type="Proteomes" id="UP000001020">
    <property type="component" value="Chromosome"/>
</dbReference>
<dbReference type="GO" id="GO:0005737">
    <property type="term" value="C:cytoplasm"/>
    <property type="evidence" value="ECO:0007669"/>
    <property type="project" value="UniProtKB-SubCell"/>
</dbReference>
<dbReference type="GO" id="GO:0005576">
    <property type="term" value="C:extracellular region"/>
    <property type="evidence" value="ECO:0007669"/>
    <property type="project" value="UniProtKB-KW"/>
</dbReference>
<dbReference type="CDD" id="cd06464">
    <property type="entry name" value="ACD_sHsps-like"/>
    <property type="match status" value="1"/>
</dbReference>
<dbReference type="Gene3D" id="2.60.40.790">
    <property type="match status" value="1"/>
</dbReference>
<dbReference type="InterPro" id="IPR002068">
    <property type="entry name" value="A-crystallin/Hsp20_dom"/>
</dbReference>
<dbReference type="InterPro" id="IPR008978">
    <property type="entry name" value="HSP20-like_chaperone"/>
</dbReference>
<dbReference type="InterPro" id="IPR031107">
    <property type="entry name" value="Small_HSP"/>
</dbReference>
<dbReference type="PANTHER" id="PTHR11527">
    <property type="entry name" value="HEAT-SHOCK PROTEIN 20 FAMILY MEMBER"/>
    <property type="match status" value="1"/>
</dbReference>
<dbReference type="Pfam" id="PF00011">
    <property type="entry name" value="HSP20"/>
    <property type="match status" value="1"/>
</dbReference>
<dbReference type="SUPFAM" id="SSF49764">
    <property type="entry name" value="HSP20-like chaperones"/>
    <property type="match status" value="1"/>
</dbReference>
<dbReference type="PROSITE" id="PS01031">
    <property type="entry name" value="SHSP"/>
    <property type="match status" value="1"/>
</dbReference>
<protein>
    <recommendedName>
        <fullName>Alpha-crystallin</fullName>
        <shortName>Acr</shortName>
    </recommendedName>
    <alternativeName>
        <fullName>14 kDa antigen</fullName>
    </alternativeName>
    <alternativeName>
        <fullName>16 kDa antigen</fullName>
    </alternativeName>
    <alternativeName>
        <fullName>HSP 16.3</fullName>
    </alternativeName>
    <alternativeName>
        <fullName>Nox16</fullName>
    </alternativeName>
</protein>
<feature type="initiator methionine" description="Removed" evidence="1">
    <location>
        <position position="1"/>
    </location>
</feature>
<feature type="chain" id="PRO_0000427290" description="Alpha-crystallin">
    <location>
        <begin position="2"/>
        <end position="144"/>
    </location>
</feature>
<feature type="domain" description="sHSP" evidence="2">
    <location>
        <begin position="33"/>
        <end position="143"/>
    </location>
</feature>
<comment type="function">
    <text evidence="1">Acts as a chaperone, as it has a significant ability to suppress the thermal denaturation of alcohol dehydrogenase.</text>
</comment>
<comment type="subcellular location">
    <subcellularLocation>
        <location evidence="1">Cytoplasm</location>
    </subcellularLocation>
    <subcellularLocation>
        <location evidence="1">Secreted</location>
        <location evidence="1">Cell wall</location>
    </subcellularLocation>
</comment>
<comment type="induction">
    <text evidence="3">A member of the dormancy regulon. Induced in response to reduced oxygen tension (hypoxia) (at protein level), and low levels of nitric oxide (NO).</text>
</comment>
<comment type="similarity">
    <text evidence="2">Belongs to the small heat shock protein (HSP20) family.</text>
</comment>
<gene>
    <name type="primary">hspX</name>
    <name type="synonym">acr</name>
    <name type="ordered locus">MT2090</name>
</gene>
<reference key="1">
    <citation type="journal article" date="2002" name="J. Bacteriol.">
        <title>Whole-genome comparison of Mycobacterium tuberculosis clinical and laboratory strains.</title>
        <authorList>
            <person name="Fleischmann R.D."/>
            <person name="Alland D."/>
            <person name="Eisen J.A."/>
            <person name="Carpenter L."/>
            <person name="White O."/>
            <person name="Peterson J.D."/>
            <person name="DeBoy R.T."/>
            <person name="Dodson R.J."/>
            <person name="Gwinn M.L."/>
            <person name="Haft D.H."/>
            <person name="Hickey E.K."/>
            <person name="Kolonay J.F."/>
            <person name="Nelson W.C."/>
            <person name="Umayam L.A."/>
            <person name="Ermolaeva M.D."/>
            <person name="Salzberg S.L."/>
            <person name="Delcher A."/>
            <person name="Utterback T.R."/>
            <person name="Weidman J.F."/>
            <person name="Khouri H.M."/>
            <person name="Gill J."/>
            <person name="Mikula A."/>
            <person name="Bishai W."/>
            <person name="Jacobs W.R. Jr."/>
            <person name="Venter J.C."/>
            <person name="Fraser C.M."/>
        </authorList>
    </citation>
    <scope>NUCLEOTIDE SEQUENCE [LARGE SCALE GENOMIC DNA]</scope>
    <source>
        <strain>CDC 1551 / Oshkosh</strain>
    </source>
</reference>
<reference key="2">
    <citation type="journal article" date="2003" name="J. Exp. Med.">
        <title>Inhibition of respiration by nitric oxide induces a Mycobacterium tuberculosis dormancy program.</title>
        <authorList>
            <person name="Voskuil M.I."/>
            <person name="Schnappinger D."/>
            <person name="Visconti K.C."/>
            <person name="Harrell M.I."/>
            <person name="Dolganov G.M."/>
            <person name="Sherman D.R."/>
            <person name="Schoolnik G.K."/>
        </authorList>
    </citation>
    <scope>INDUCTION BY NITRIC OXIDE (NO); BY HYPOXIA; IN MOUSE MODEL AND DORMANCY REGULON</scope>
    <source>
        <strain>CDC 1551 / Oshkosh</strain>
    </source>
</reference>
<sequence length="144" mass="16227">MATTLPVQRHPRSLFPEFSELFAAFPSFAGLRPTFDTRLMRLEDEMKEGRYEVRAELPGVDPDKDVDIMVRDGQLTIKAERTEQKDFDGRSEFAYGSFVRTVSLPVGADEDDIKATYDKGILTVSVAVSEGKPTEKHIQIRSTN</sequence>
<accession>P9WMK0</accession>
<accession>L0TBA7</accession>
<accession>P0A5B7</accession>
<accession>P30223</accession>
<proteinExistence type="evidence at protein level"/>
<evidence type="ECO:0000250" key="1"/>
<evidence type="ECO:0000255" key="2">
    <source>
        <dbReference type="PROSITE-ProRule" id="PRU00285"/>
    </source>
</evidence>
<evidence type="ECO:0000269" key="3">
    <source>
    </source>
</evidence>
<organism>
    <name type="scientific">Mycobacterium tuberculosis (strain CDC 1551 / Oshkosh)</name>
    <dbReference type="NCBI Taxonomy" id="83331"/>
    <lineage>
        <taxon>Bacteria</taxon>
        <taxon>Bacillati</taxon>
        <taxon>Actinomycetota</taxon>
        <taxon>Actinomycetes</taxon>
        <taxon>Mycobacteriales</taxon>
        <taxon>Mycobacteriaceae</taxon>
        <taxon>Mycobacterium</taxon>
        <taxon>Mycobacterium tuberculosis complex</taxon>
    </lineage>
</organism>
<keyword id="KW-0134">Cell wall</keyword>
<keyword id="KW-0143">Chaperone</keyword>
<keyword id="KW-0963">Cytoplasm</keyword>
<keyword id="KW-1185">Reference proteome</keyword>
<keyword id="KW-0964">Secreted</keyword>
<name>ACR_MYCTO</name>